<name>HFM1_YEAST</name>
<evidence type="ECO:0000255" key="1">
    <source>
        <dbReference type="PROSITE-ProRule" id="PRU00541"/>
    </source>
</evidence>
<evidence type="ECO:0000255" key="2">
    <source>
        <dbReference type="PROSITE-ProRule" id="PRU00542"/>
    </source>
</evidence>
<evidence type="ECO:0000256" key="3">
    <source>
        <dbReference type="SAM" id="MobiDB-lite"/>
    </source>
</evidence>
<evidence type="ECO:0000269" key="4">
    <source>
    </source>
</evidence>
<evidence type="ECO:0000269" key="5">
    <source>
    </source>
</evidence>
<evidence type="ECO:0000269" key="6">
    <source>
    </source>
</evidence>
<evidence type="ECO:0000269" key="7">
    <source>
    </source>
</evidence>
<evidence type="ECO:0000303" key="8">
    <source>
    </source>
</evidence>
<evidence type="ECO:0000303" key="9">
    <source>
    </source>
</evidence>
<evidence type="ECO:0000305" key="10"/>
<evidence type="ECO:0000305" key="11">
    <source>
    </source>
</evidence>
<evidence type="ECO:0000305" key="12">
    <source>
    </source>
</evidence>
<evidence type="ECO:0000305" key="13">
    <source>
    </source>
</evidence>
<keyword id="KW-0067">ATP-binding</keyword>
<keyword id="KW-0238">DNA-binding</keyword>
<keyword id="KW-0347">Helicase</keyword>
<keyword id="KW-0378">Hydrolase</keyword>
<keyword id="KW-0413">Isomerase</keyword>
<keyword id="KW-0469">Meiosis</keyword>
<keyword id="KW-0479">Metal-binding</keyword>
<keyword id="KW-0547">Nucleotide-binding</keyword>
<keyword id="KW-0539">Nucleus</keyword>
<keyword id="KW-1185">Reference proteome</keyword>
<keyword id="KW-0749">Sporulation</keyword>
<keyword id="KW-0862">Zinc</keyword>
<keyword id="KW-0863">Zinc-finger</keyword>
<proteinExistence type="evidence at protein level"/>
<dbReference type="EC" id="5.6.2.4" evidence="5 6 7"/>
<dbReference type="EMBL" id="X94357">
    <property type="protein sequence ID" value="CAA64136.1"/>
    <property type="status" value="ALT_SEQ"/>
    <property type="molecule type" value="Genomic_DNA"/>
</dbReference>
<dbReference type="EMBL" id="Z72773">
    <property type="protein sequence ID" value="CAA96971.1"/>
    <property type="status" value="ALT_SEQ"/>
    <property type="molecule type" value="Genomic_DNA"/>
</dbReference>
<dbReference type="EMBL" id="U22156">
    <property type="protein sequence ID" value="AAA93159.1"/>
    <property type="status" value="ALT_INIT"/>
    <property type="molecule type" value="Genomic_DNA"/>
</dbReference>
<dbReference type="EMBL" id="BK006941">
    <property type="protein sequence ID" value="DAA07868.1"/>
    <property type="molecule type" value="Genomic_DNA"/>
</dbReference>
<dbReference type="RefSeq" id="NP_011263.2">
    <property type="nucleotide sequence ID" value="NM_001181117.1"/>
</dbReference>
<dbReference type="SMR" id="P51979"/>
<dbReference type="BioGRID" id="33028">
    <property type="interactions" value="46"/>
</dbReference>
<dbReference type="DIP" id="DIP-2604N"/>
<dbReference type="FunCoup" id="P51979">
    <property type="interactions" value="524"/>
</dbReference>
<dbReference type="IntAct" id="P51979">
    <property type="interactions" value="3"/>
</dbReference>
<dbReference type="MINT" id="P51979"/>
<dbReference type="STRING" id="4932.YGL251C"/>
<dbReference type="iPTMnet" id="P51979"/>
<dbReference type="PaxDb" id="4932-YGL251C"/>
<dbReference type="PeptideAtlas" id="P51979"/>
<dbReference type="EnsemblFungi" id="YGL251C_mRNA">
    <property type="protein sequence ID" value="YGL251C"/>
    <property type="gene ID" value="YGL251C"/>
</dbReference>
<dbReference type="GeneID" id="852641"/>
<dbReference type="KEGG" id="sce:YGL251C"/>
<dbReference type="AGR" id="SGD:S000003220"/>
<dbReference type="SGD" id="S000003220">
    <property type="gene designation" value="HFM1"/>
</dbReference>
<dbReference type="VEuPathDB" id="FungiDB:YGL251C"/>
<dbReference type="eggNOG" id="KOG0952">
    <property type="taxonomic scope" value="Eukaryota"/>
</dbReference>
<dbReference type="GeneTree" id="ENSGT00940000176293"/>
<dbReference type="HOGENOM" id="CLU_000335_0_1_1"/>
<dbReference type="InParanoid" id="P51979"/>
<dbReference type="OMA" id="VYGYQSH"/>
<dbReference type="OrthoDB" id="5575at2759"/>
<dbReference type="BioCyc" id="YEAST:G3O-30721-MONOMER"/>
<dbReference type="BRENDA" id="3.6.4.12">
    <property type="organism ID" value="984"/>
</dbReference>
<dbReference type="BioGRID-ORCS" id="852641">
    <property type="hits" value="1 hit in 10 CRISPR screens"/>
</dbReference>
<dbReference type="PRO" id="PR:P51979"/>
<dbReference type="Proteomes" id="UP000002311">
    <property type="component" value="Chromosome VII"/>
</dbReference>
<dbReference type="RNAct" id="P51979">
    <property type="molecule type" value="protein"/>
</dbReference>
<dbReference type="GO" id="GO:0005634">
    <property type="term" value="C:nucleus"/>
    <property type="evidence" value="ECO:0000314"/>
    <property type="project" value="SGD"/>
</dbReference>
<dbReference type="GO" id="GO:0005524">
    <property type="term" value="F:ATP binding"/>
    <property type="evidence" value="ECO:0007669"/>
    <property type="project" value="UniProtKB-KW"/>
</dbReference>
<dbReference type="GO" id="GO:0016887">
    <property type="term" value="F:ATP hydrolysis activity"/>
    <property type="evidence" value="ECO:0007669"/>
    <property type="project" value="RHEA"/>
</dbReference>
<dbReference type="GO" id="GO:0003677">
    <property type="term" value="F:DNA binding"/>
    <property type="evidence" value="ECO:0007669"/>
    <property type="project" value="UniProtKB-KW"/>
</dbReference>
<dbReference type="GO" id="GO:0003678">
    <property type="term" value="F:DNA helicase activity"/>
    <property type="evidence" value="ECO:0000314"/>
    <property type="project" value="SGD"/>
</dbReference>
<dbReference type="GO" id="GO:0008270">
    <property type="term" value="F:zinc ion binding"/>
    <property type="evidence" value="ECO:0007669"/>
    <property type="project" value="UniProtKB-KW"/>
</dbReference>
<dbReference type="GO" id="GO:0006260">
    <property type="term" value="P:DNA replication"/>
    <property type="evidence" value="ECO:0000314"/>
    <property type="project" value="SGD"/>
</dbReference>
<dbReference type="GO" id="GO:0007129">
    <property type="term" value="P:homologous chromosome pairing at meiosis"/>
    <property type="evidence" value="ECO:0000315"/>
    <property type="project" value="SGD"/>
</dbReference>
<dbReference type="GO" id="GO:0051321">
    <property type="term" value="P:meiotic cell cycle"/>
    <property type="evidence" value="ECO:0000314"/>
    <property type="project" value="SGD"/>
</dbReference>
<dbReference type="GO" id="GO:0007131">
    <property type="term" value="P:reciprocal meiotic recombination"/>
    <property type="evidence" value="ECO:0000315"/>
    <property type="project" value="SGD"/>
</dbReference>
<dbReference type="GO" id="GO:0000712">
    <property type="term" value="P:resolution of meiotic recombination intermediates"/>
    <property type="evidence" value="ECO:0000318"/>
    <property type="project" value="GO_Central"/>
</dbReference>
<dbReference type="CDD" id="cd18023">
    <property type="entry name" value="DEXHc_HFM1"/>
    <property type="match status" value="1"/>
</dbReference>
<dbReference type="CDD" id="cd18795">
    <property type="entry name" value="SF2_C_Ski2"/>
    <property type="match status" value="1"/>
</dbReference>
<dbReference type="FunFam" id="3.40.50.300:FF:001076">
    <property type="entry name" value="ATP-dependent DNA helicase MER3"/>
    <property type="match status" value="1"/>
</dbReference>
<dbReference type="FunFam" id="1.10.3380.10:FF:000012">
    <property type="entry name" value="DEAD/DEAH box DNA helicase"/>
    <property type="match status" value="1"/>
</dbReference>
<dbReference type="FunFam" id="3.40.50.300:FF:000950">
    <property type="entry name" value="probable ATP-dependent DNA helicase HFM1"/>
    <property type="match status" value="1"/>
</dbReference>
<dbReference type="Gene3D" id="3.40.50.300">
    <property type="entry name" value="P-loop containing nucleotide triphosphate hydrolases"/>
    <property type="match status" value="2"/>
</dbReference>
<dbReference type="Gene3D" id="1.10.3380.10">
    <property type="entry name" value="Sec63 N-terminal domain-like domain"/>
    <property type="match status" value="1"/>
</dbReference>
<dbReference type="Gene3D" id="1.10.10.10">
    <property type="entry name" value="Winged helix-like DNA-binding domain superfamily/Winged helix DNA-binding domain"/>
    <property type="match status" value="1"/>
</dbReference>
<dbReference type="InterPro" id="IPR011545">
    <property type="entry name" value="DEAD/DEAH_box_helicase_dom"/>
</dbReference>
<dbReference type="InterPro" id="IPR014001">
    <property type="entry name" value="Helicase_ATP-bd"/>
</dbReference>
<dbReference type="InterPro" id="IPR001650">
    <property type="entry name" value="Helicase_C-like"/>
</dbReference>
<dbReference type="InterPro" id="IPR052247">
    <property type="entry name" value="Meiotic_Crossover_Helicase"/>
</dbReference>
<dbReference type="InterPro" id="IPR027417">
    <property type="entry name" value="P-loop_NTPase"/>
</dbReference>
<dbReference type="InterPro" id="IPR004179">
    <property type="entry name" value="Sec63-dom"/>
</dbReference>
<dbReference type="InterPro" id="IPR036388">
    <property type="entry name" value="WH-like_DNA-bd_sf"/>
</dbReference>
<dbReference type="PANTHER" id="PTHR47835:SF3">
    <property type="entry name" value="HELICASE FOR MEIOSIS 1"/>
    <property type="match status" value="1"/>
</dbReference>
<dbReference type="PANTHER" id="PTHR47835">
    <property type="entry name" value="HFM1, ATP DEPENDENT DNA HELICASE HOMOLOG"/>
    <property type="match status" value="1"/>
</dbReference>
<dbReference type="Pfam" id="PF00270">
    <property type="entry name" value="DEAD"/>
    <property type="match status" value="1"/>
</dbReference>
<dbReference type="Pfam" id="PF00271">
    <property type="entry name" value="Helicase_C"/>
    <property type="match status" value="1"/>
</dbReference>
<dbReference type="Pfam" id="PF02889">
    <property type="entry name" value="Sec63"/>
    <property type="match status" value="1"/>
</dbReference>
<dbReference type="Pfam" id="PF23445">
    <property type="entry name" value="SNRNP200_wHTH"/>
    <property type="match status" value="1"/>
</dbReference>
<dbReference type="SMART" id="SM00487">
    <property type="entry name" value="DEXDc"/>
    <property type="match status" value="1"/>
</dbReference>
<dbReference type="SMART" id="SM00490">
    <property type="entry name" value="HELICc"/>
    <property type="match status" value="1"/>
</dbReference>
<dbReference type="SMART" id="SM00973">
    <property type="entry name" value="Sec63"/>
    <property type="match status" value="1"/>
</dbReference>
<dbReference type="SUPFAM" id="SSF52540">
    <property type="entry name" value="P-loop containing nucleoside triphosphate hydrolases"/>
    <property type="match status" value="1"/>
</dbReference>
<dbReference type="SUPFAM" id="SSF158702">
    <property type="entry name" value="Sec63 N-terminal domain-like"/>
    <property type="match status" value="1"/>
</dbReference>
<dbReference type="PROSITE" id="PS51192">
    <property type="entry name" value="HELICASE_ATP_BIND_1"/>
    <property type="match status" value="1"/>
</dbReference>
<dbReference type="PROSITE" id="PS51194">
    <property type="entry name" value="HELICASE_CTER"/>
    <property type="match status" value="1"/>
</dbReference>
<comment type="function">
    <text evidence="4 5 6 7">DNA-dependent ATPase and 3'-5' DNA helicase (PubMed:11376001, PubMed:12039965). Required in the control of double strand break transition and crossover during meiosis (PubMed:10523314, PubMed:11971962). ATPase is slightly better stimulated by single-stranded (ss) than double-stranded (ds)DNA (PubMed:11376001). Unwinds Holliday junction (HJ) DNA to Y-DNA and to ssDNA (PubMed:12039965). Efficient unwinding requires 6 nucleotides of 3'-ssDNA; seems to initiate unwinding from blunt ends when they open slightly (PubMed:12039965). Binds HJ, dsDNA, ssDNA and 3'- and 5-overhang DNA (PubMed:11971962, PubMed:12039965).</text>
</comment>
<comment type="catalytic activity">
    <reaction evidence="5 6 7">
        <text>Couples ATP hydrolysis with the unwinding of duplex DNA by translocating in the 3'-5' direction.</text>
        <dbReference type="EC" id="5.6.2.4"/>
    </reaction>
</comment>
<comment type="catalytic activity">
    <reaction evidence="5 6 13">
        <text>ATP + H2O = ADP + phosphate + H(+)</text>
        <dbReference type="Rhea" id="RHEA:13065"/>
        <dbReference type="ChEBI" id="CHEBI:15377"/>
        <dbReference type="ChEBI" id="CHEBI:15378"/>
        <dbReference type="ChEBI" id="CHEBI:30616"/>
        <dbReference type="ChEBI" id="CHEBI:43474"/>
        <dbReference type="ChEBI" id="CHEBI:456216"/>
        <dbReference type="EC" id="5.6.2.4"/>
    </reaction>
</comment>
<comment type="cofactor">
    <cofactor evidence="5">
        <name>a divalent metal cation</name>
        <dbReference type="ChEBI" id="CHEBI:60240"/>
    </cofactor>
    <text evidence="5 7">Mg(2+), Mn(2+) and Ca(2+) support ATPase activity equally, Zn(2+) does not (PubMed:11376001). Mg(2+) and Mn(2+) support helicase activity (PubMed:12039965).</text>
</comment>
<comment type="cofactor">
    <cofactor evidence="11">
        <name>Zn(2+)</name>
        <dbReference type="ChEBI" id="CHEBI:29105"/>
    </cofactor>
    <text evidence="11">Might have a zinc-finger.</text>
</comment>
<comment type="subunit">
    <text evidence="12">Oligomerizes (Probable) (PubMed:11376001).</text>
</comment>
<comment type="subcellular location">
    <subcellularLocation>
        <location evidence="10">Nucleus</location>
    </subcellularLocation>
</comment>
<comment type="disruption phenotype">
    <text evidence="4 6">No phenotype during vegetative growth, transition of double strand breaks to later recombination intermediates is partially blocked, crossovers are reduced and distributed randomly, with a high incidence of homolog non-disjunction at meiosis I (PubMed:10523314). About 10% of wild-type level of meiotic divisions at 30 degrees Celsius, at 23 degrees Celsius delayed appearance of meiotic divisions, which eventually reaches the wild-type levels (PubMed:11971962). Decreased spore viability (PubMed:10523314, PubMed:11971962).</text>
</comment>
<comment type="similarity">
    <text evidence="10">Belongs to the helicase family. SKI2 subfamily.</text>
</comment>
<comment type="sequence caution" evidence="10">
    <conflict type="erroneous initiation">
        <sequence resource="EMBL-CDS" id="AAA93159"/>
    </conflict>
</comment>
<comment type="sequence caution" evidence="10">
    <conflict type="erroneous gene model prediction">
        <sequence resource="EMBL-CDS" id="CAA64136"/>
    </conflict>
</comment>
<comment type="sequence caution" evidence="10">
    <conflict type="erroneous gene model prediction">
        <sequence resource="EMBL-CDS" id="CAA96971"/>
    </conflict>
</comment>
<organism>
    <name type="scientific">Saccharomyces cerevisiae (strain ATCC 204508 / S288c)</name>
    <name type="common">Baker's yeast</name>
    <dbReference type="NCBI Taxonomy" id="559292"/>
    <lineage>
        <taxon>Eukaryota</taxon>
        <taxon>Fungi</taxon>
        <taxon>Dikarya</taxon>
        <taxon>Ascomycota</taxon>
        <taxon>Saccharomycotina</taxon>
        <taxon>Saccharomycetes</taxon>
        <taxon>Saccharomycetales</taxon>
        <taxon>Saccharomycetaceae</taxon>
        <taxon>Saccharomyces</taxon>
    </lineage>
</organism>
<protein>
    <recommendedName>
        <fullName>ATP-dependent DNA helicase MER3</fullName>
        <ecNumber evidence="5 6 7">5.6.2.4</ecNumber>
    </recommendedName>
    <alternativeName>
        <fullName evidence="10">DNA 3'-5' helicase MER3</fullName>
    </alternativeName>
    <alternativeName>
        <fullName>Protein HFM1</fullName>
    </alternativeName>
</protein>
<reference key="1">
    <citation type="journal article" date="1996" name="Yeast">
        <title>Sequence of a 39,411 bp DNA fragment covering the left end of chromosome VII of Saccharomyces cerevisiae.</title>
        <authorList>
            <person name="Coissac E."/>
            <person name="Maillier E."/>
            <person name="Robineau S."/>
            <person name="Netter P."/>
        </authorList>
    </citation>
    <scope>NUCLEOTIDE SEQUENCE [GENOMIC DNA]</scope>
    <source>
        <strain>ATCC 96604 / S288c / FY1679</strain>
    </source>
</reference>
<reference key="2">
    <citation type="journal article" date="1997" name="Nature">
        <title>The nucleotide sequence of Saccharomyces cerevisiae chromosome VII.</title>
        <authorList>
            <person name="Tettelin H."/>
            <person name="Agostoni-Carbone M.L."/>
            <person name="Albermann K."/>
            <person name="Albers M."/>
            <person name="Arroyo J."/>
            <person name="Backes U."/>
            <person name="Barreiros T."/>
            <person name="Bertani I."/>
            <person name="Bjourson A.J."/>
            <person name="Brueckner M."/>
            <person name="Bruschi C.V."/>
            <person name="Carignani G."/>
            <person name="Castagnoli L."/>
            <person name="Cerdan E."/>
            <person name="Clemente M.L."/>
            <person name="Coblenz A."/>
            <person name="Coglievina M."/>
            <person name="Coissac E."/>
            <person name="Defoor E."/>
            <person name="Del Bino S."/>
            <person name="Delius H."/>
            <person name="Delneri D."/>
            <person name="de Wergifosse P."/>
            <person name="Dujon B."/>
            <person name="Durand P."/>
            <person name="Entian K.-D."/>
            <person name="Eraso P."/>
            <person name="Escribano V."/>
            <person name="Fabiani L."/>
            <person name="Fartmann B."/>
            <person name="Feroli F."/>
            <person name="Feuermann M."/>
            <person name="Frontali L."/>
            <person name="Garcia-Gonzalez M."/>
            <person name="Garcia-Saez M.I."/>
            <person name="Goffeau A."/>
            <person name="Guerreiro P."/>
            <person name="Hani J."/>
            <person name="Hansen M."/>
            <person name="Hebling U."/>
            <person name="Hernandez K."/>
            <person name="Heumann K."/>
            <person name="Hilger F."/>
            <person name="Hofmann B."/>
            <person name="Indge K.J."/>
            <person name="James C.M."/>
            <person name="Klima R."/>
            <person name="Koetter P."/>
            <person name="Kramer B."/>
            <person name="Kramer W."/>
            <person name="Lauquin G."/>
            <person name="Leuther H."/>
            <person name="Louis E.J."/>
            <person name="Maillier E."/>
            <person name="Marconi A."/>
            <person name="Martegani E."/>
            <person name="Mazon M.J."/>
            <person name="Mazzoni C."/>
            <person name="McReynolds A.D.K."/>
            <person name="Melchioretto P."/>
            <person name="Mewes H.-W."/>
            <person name="Minenkova O."/>
            <person name="Mueller-Auer S."/>
            <person name="Nawrocki A."/>
            <person name="Netter P."/>
            <person name="Neu R."/>
            <person name="Nombela C."/>
            <person name="Oliver S.G."/>
            <person name="Panzeri L."/>
            <person name="Paoluzi S."/>
            <person name="Plevani P."/>
            <person name="Portetelle D."/>
            <person name="Portillo F."/>
            <person name="Potier S."/>
            <person name="Purnelle B."/>
            <person name="Rieger M."/>
            <person name="Riles L."/>
            <person name="Rinaldi T."/>
            <person name="Robben J."/>
            <person name="Rodrigues-Pousada C."/>
            <person name="Rodriguez-Belmonte E."/>
            <person name="Rodriguez-Torres A.M."/>
            <person name="Rose M."/>
            <person name="Ruzzi M."/>
            <person name="Saliola M."/>
            <person name="Sanchez-Perez M."/>
            <person name="Schaefer B."/>
            <person name="Schaefer M."/>
            <person name="Scharfe M."/>
            <person name="Schmidheini T."/>
            <person name="Schreer A."/>
            <person name="Skala J."/>
            <person name="Souciet J.-L."/>
            <person name="Steensma H.Y."/>
            <person name="Talla E."/>
            <person name="Thierry A."/>
            <person name="Vandenbol M."/>
            <person name="van der Aart Q.J.M."/>
            <person name="Van Dyck L."/>
            <person name="Vanoni M."/>
            <person name="Verhasselt P."/>
            <person name="Voet M."/>
            <person name="Volckaert G."/>
            <person name="Wambutt R."/>
            <person name="Watson M.D."/>
            <person name="Weber N."/>
            <person name="Wedler E."/>
            <person name="Wedler H."/>
            <person name="Wipfli P."/>
            <person name="Wolf K."/>
            <person name="Wright L.F."/>
            <person name="Zaccaria P."/>
            <person name="Zimmermann M."/>
            <person name="Zollner A."/>
            <person name="Kleine K."/>
        </authorList>
    </citation>
    <scope>NUCLEOTIDE SEQUENCE [LARGE SCALE GENOMIC DNA]</scope>
    <source>
        <strain>ATCC 204508 / S288c</strain>
    </source>
</reference>
<reference key="3">
    <citation type="journal article" date="2014" name="G3 (Bethesda)">
        <title>The reference genome sequence of Saccharomyces cerevisiae: Then and now.</title>
        <authorList>
            <person name="Engel S.R."/>
            <person name="Dietrich F.S."/>
            <person name="Fisk D.G."/>
            <person name="Binkley G."/>
            <person name="Balakrishnan R."/>
            <person name="Costanzo M.C."/>
            <person name="Dwight S.S."/>
            <person name="Hitz B.C."/>
            <person name="Karra K."/>
            <person name="Nash R.S."/>
            <person name="Weng S."/>
            <person name="Wong E.D."/>
            <person name="Lloyd P."/>
            <person name="Skrzypek M.S."/>
            <person name="Miyasato S.R."/>
            <person name="Simison M."/>
            <person name="Cherry J.M."/>
        </authorList>
    </citation>
    <scope>GENOME REANNOTATION</scope>
    <source>
        <strain>ATCC 204508 / S288c</strain>
    </source>
</reference>
<reference key="4">
    <citation type="submission" date="1995-03" db="EMBL/GenBank/DDBJ databases">
        <title>Saccharomyces cerevisiae Hfm1p (HFM1) gene.</title>
        <authorList>
            <person name="West R.W. Jr."/>
            <person name="Thomas S."/>
            <person name="Ma J.L."/>
            <person name="Finley R.L. Jr."/>
        </authorList>
    </citation>
    <scope>NUCLEOTIDE SEQUENCE [GENOMIC DNA] OF 21-1187</scope>
</reference>
<reference key="5">
    <citation type="journal article" date="1999" name="EMBO J.">
        <title>The Saccharomyces cerevisiae MER3 gene, encoding a novel helicase-like protein, is required for crossover control in meiosis.</title>
        <authorList>
            <person name="Nakagawa T."/>
            <person name="Ogawa H."/>
        </authorList>
    </citation>
    <scope>FUNCTION</scope>
    <scope>POSSIBLE ZINC-FINGER</scope>
    <scope>DISRUPTION PHENOTYPE</scope>
</reference>
<reference key="6">
    <citation type="journal article" date="2001" name="J. Biol. Chem.">
        <title>The mer3 helicase involved in meiotic crossing over is stimulated by single-stranded DNA-binding proteins and unwinds DNA in the 3' to 5' direction.</title>
        <authorList>
            <person name="Nakagawa T."/>
            <person name="Flores-Rozas H."/>
            <person name="Kolodner R.D."/>
        </authorList>
    </citation>
    <scope>FUNCTION AS A 3'-5' HELICASE</scope>
    <scope>FUNCTION AS AN ATPASE</scope>
    <scope>COFACTOR</scope>
    <scope>SUBUNIT</scope>
    <scope>MUTAGENESIS OF GLY-166</scope>
</reference>
<reference key="7">
    <citation type="journal article" date="2002" name="Mol. Cell. Biol.">
        <title>Saccharomyces cerevisiae Mer3 is a DNA helicase involved in meiotic crossing over.</title>
        <authorList>
            <person name="Nakagawa T."/>
            <person name="Kolodner R.D."/>
        </authorList>
    </citation>
    <scope>FUNCTION</scope>
    <scope>CATALYTIC ACTIVITY</scope>
    <scope>DISRUPTION PHENOTYPE</scope>
    <scope>DNA-BINDING</scope>
    <scope>MUTAGENESIS OF GLY-166 AND LYS-167</scope>
</reference>
<reference key="8">
    <citation type="journal article" date="2002" name="J. Biol. Chem.">
        <title>The MER3 DNA helicase catalyzes the unwinding of Holliday junctions.</title>
        <authorList>
            <person name="Nakagawa T."/>
            <person name="Kolodner R.D."/>
        </authorList>
    </citation>
    <scope>FUNCTION AS A 3'-5' HELICASE</scope>
    <scope>CATALYTIC ACTIVITY</scope>
    <scope>COFACTOR</scope>
    <scope>DNA-BINDING</scope>
</reference>
<accession>P51979</accession>
<accession>D6VV84</accession>
<gene>
    <name evidence="9" type="primary">HFM1</name>
    <name evidence="8" type="synonym">MER3</name>
    <name type="ordered locus">YGL251C</name>
    <name type="ORF">NRE1046</name>
</gene>
<sequence length="1187" mass="135072">MKTKFDRLGTGKRSRPSPNNIDFNDQSATFKRNKKNSRQPSFKVGLSYNSLLDDCDDENETEEIFEGRGLQFFDKDDNFSITADDTQVTSKLFDHDLEQTPDEEAKKPKKVTIRKSAKKCLSTTILPDSFRGVFKFTEFNKMQSEAFPSIYESNENCIISSPTGSGKTVLFELAILRLIKETNSDTNNTKIIYIAPTKSLCYEMYKNWFPSFVNLSVGMLTSDTSFLETEKAKKCNIIITTPEKWDLLTRRWSDYSRLFELVKLVLVDEIHTIKEKRGASLEVILTRMNTMCQNIRFVALSATVPNIEDLALWLKTNNELPANILSFDESYRQVQLTKFVYGYSFNCKNDFQKDAIYNSKLIEIIEKHADNRPVLIFCPTRASTISTAKFLLNNHIFSKSKKRCNHNPSDKILNECMQQGIAFHHAGISLEDRTAVEKEFLAGSINILCSTSTLAVGVNLPAYLVIIKGTKSWNSSEIQEYSDLDVLQMIGRAGRPQFETHGCAVIMTDSKMKQTYENLIHGTDVLESSLHLNLIEHLAAETSLETVYSIETAVNWLRNTFFYVRFGKNPAAYQEVNRYVSFHSVEDSQINQFCQYLLDTLVKVKIIDISNGEYKSTAYGNAMTRHYISFESMKQFINAKKFLSLQGILNLLATSEEFSVMRVRHNEKKLFKEINLSPLLKYPFLTEKKQSQIIDRVSQKVSLLIQYELGGLEFPSYEGASKLHQTLVQDKFLVFRHCFRLLKCMVDTFIEKSDGTSLKNTLFLLRSLNGHCWENTPMVLRQLKTIGLVSVRRLIRHGITNLEEMGHLSDTQIEYYLNLKIGNGIKIKNDISLLPCLNIRTKLENCKIENEELWLTFKVEISATFKSSIWHGQHLSLDIETEKSSGELIDFRRLQVNKLQSPRGFRISAKISPKLEKIEFSIHCQEIAGLGKTIVYSTDHLASQFSAKTPNIRKDLNSLEKCLFYESSSDGEVGKTSRVSHKDGLEESLSSDDSILDYLNERKKSSKAVESAAVIHPEAHSSSHFSNGRQVRSNGNYECFHSCKDKTQCRHLCCKEGIPVKYIKEKGPSSIKPVSKPDQIRQPLLAKNINTTPHLEKRLNSKPKQWQEENTDIATVHTLPSKIYNLSQQMSSMEAGEQVLKSGPENCPEIIPIDLESSDSYSSNTAASSISDPNGDLDFLGSDIEFE</sequence>
<feature type="chain" id="PRO_0000102090" description="ATP-dependent DNA helicase MER3">
    <location>
        <begin position="1"/>
        <end position="1187"/>
    </location>
</feature>
<feature type="domain" description="Helicase ATP-binding" evidence="1">
    <location>
        <begin position="148"/>
        <end position="322"/>
    </location>
</feature>
<feature type="domain" description="Helicase C-terminal" evidence="2">
    <location>
        <begin position="360"/>
        <end position="542"/>
    </location>
</feature>
<feature type="domain" description="SEC63">
    <location>
        <begin position="616"/>
        <end position="922"/>
    </location>
</feature>
<feature type="zinc finger region" description="C4-type" evidence="11">
    <location>
        <begin position="1039"/>
        <end position="1054"/>
    </location>
</feature>
<feature type="region of interest" description="Disordered" evidence="3">
    <location>
        <begin position="1"/>
        <end position="41"/>
    </location>
</feature>
<feature type="region of interest" description="Disordered" evidence="3">
    <location>
        <begin position="1146"/>
        <end position="1187"/>
    </location>
</feature>
<feature type="short sequence motif" description="DEIH box">
    <location>
        <begin position="268"/>
        <end position="271"/>
    </location>
</feature>
<feature type="compositionally biased region" description="Polar residues" evidence="3">
    <location>
        <begin position="16"/>
        <end position="30"/>
    </location>
</feature>
<feature type="compositionally biased region" description="Low complexity" evidence="3">
    <location>
        <begin position="1158"/>
        <end position="1171"/>
    </location>
</feature>
<feature type="binding site" evidence="1">
    <location>
        <begin position="161"/>
        <end position="168"/>
    </location>
    <ligand>
        <name>ATP</name>
        <dbReference type="ChEBI" id="CHEBI:30616"/>
    </ligand>
</feature>
<feature type="mutagenesis site" description="Decrease in ATPase activity. Delayed onset of meiotic division, DNA double-stranded breaks accumulate later and to higher levels before disappearing, decreased spore viability, greatly decreased helicase and ATPase." evidence="5 6">
    <original>G</original>
    <variation>D</variation>
    <location>
        <position position="166"/>
    </location>
</feature>
<feature type="mutagenesis site" description="Delayed onset of meiotic division, DNA double-stranded breaks accumulate later and to higher levels before disappearing, decreased spore viability, loss of ATPase." evidence="6">
    <original>K</original>
    <variation>A</variation>
    <location>
        <position position="167"/>
    </location>
</feature>
<feature type="sequence conflict" description="In Ref. 4; AAA93159." evidence="10" ref="4">
    <original>T</original>
    <variation>TAA</variation>
    <location>
        <position position="552"/>
    </location>
</feature>